<gene>
    <name evidence="1" type="primary">acpS</name>
    <name type="ordered locus">BAA_0277</name>
</gene>
<comment type="function">
    <text evidence="1">Transfers the 4'-phosphopantetheine moiety from coenzyme A to a Ser of acyl-carrier-protein.</text>
</comment>
<comment type="catalytic activity">
    <reaction evidence="1">
        <text>apo-[ACP] + CoA = holo-[ACP] + adenosine 3',5'-bisphosphate + H(+)</text>
        <dbReference type="Rhea" id="RHEA:12068"/>
        <dbReference type="Rhea" id="RHEA-COMP:9685"/>
        <dbReference type="Rhea" id="RHEA-COMP:9690"/>
        <dbReference type="ChEBI" id="CHEBI:15378"/>
        <dbReference type="ChEBI" id="CHEBI:29999"/>
        <dbReference type="ChEBI" id="CHEBI:57287"/>
        <dbReference type="ChEBI" id="CHEBI:58343"/>
        <dbReference type="ChEBI" id="CHEBI:64479"/>
        <dbReference type="EC" id="2.7.8.7"/>
    </reaction>
</comment>
<comment type="cofactor">
    <cofactor evidence="1">
        <name>Mg(2+)</name>
        <dbReference type="ChEBI" id="CHEBI:18420"/>
    </cofactor>
</comment>
<comment type="subcellular location">
    <subcellularLocation>
        <location evidence="1">Cytoplasm</location>
    </subcellularLocation>
</comment>
<comment type="similarity">
    <text evidence="1">Belongs to the P-Pant transferase superfamily. AcpS family.</text>
</comment>
<name>ACPS_BACAA</name>
<dbReference type="EC" id="2.7.8.7" evidence="1"/>
<dbReference type="EMBL" id="CP001598">
    <property type="protein sequence ID" value="ACQ49922.1"/>
    <property type="molecule type" value="Genomic_DNA"/>
</dbReference>
<dbReference type="RefSeq" id="WP_000635040.1">
    <property type="nucleotide sequence ID" value="NC_012659.1"/>
</dbReference>
<dbReference type="SMR" id="C3PAT6"/>
<dbReference type="GeneID" id="45020288"/>
<dbReference type="KEGG" id="bai:BAA_0277"/>
<dbReference type="HOGENOM" id="CLU_089696_1_2_9"/>
<dbReference type="GO" id="GO:0005829">
    <property type="term" value="C:cytosol"/>
    <property type="evidence" value="ECO:0007669"/>
    <property type="project" value="TreeGrafter"/>
</dbReference>
<dbReference type="GO" id="GO:0008897">
    <property type="term" value="F:holo-[acyl-carrier-protein] synthase activity"/>
    <property type="evidence" value="ECO:0007669"/>
    <property type="project" value="UniProtKB-UniRule"/>
</dbReference>
<dbReference type="GO" id="GO:0000287">
    <property type="term" value="F:magnesium ion binding"/>
    <property type="evidence" value="ECO:0007669"/>
    <property type="project" value="UniProtKB-UniRule"/>
</dbReference>
<dbReference type="GO" id="GO:0006633">
    <property type="term" value="P:fatty acid biosynthetic process"/>
    <property type="evidence" value="ECO:0007669"/>
    <property type="project" value="UniProtKB-UniRule"/>
</dbReference>
<dbReference type="GO" id="GO:0019878">
    <property type="term" value="P:lysine biosynthetic process via aminoadipic acid"/>
    <property type="evidence" value="ECO:0007669"/>
    <property type="project" value="TreeGrafter"/>
</dbReference>
<dbReference type="Gene3D" id="3.90.470.20">
    <property type="entry name" value="4'-phosphopantetheinyl transferase domain"/>
    <property type="match status" value="1"/>
</dbReference>
<dbReference type="HAMAP" id="MF_00101">
    <property type="entry name" value="AcpS"/>
    <property type="match status" value="1"/>
</dbReference>
<dbReference type="InterPro" id="IPR008278">
    <property type="entry name" value="4-PPantetheinyl_Trfase_dom"/>
</dbReference>
<dbReference type="InterPro" id="IPR037143">
    <property type="entry name" value="4-PPantetheinyl_Trfase_dom_sf"/>
</dbReference>
<dbReference type="InterPro" id="IPR002582">
    <property type="entry name" value="ACPS"/>
</dbReference>
<dbReference type="InterPro" id="IPR050559">
    <property type="entry name" value="P-Pant_transferase_sf"/>
</dbReference>
<dbReference type="InterPro" id="IPR004568">
    <property type="entry name" value="Ppantetheine-prot_Trfase_dom"/>
</dbReference>
<dbReference type="NCBIfam" id="TIGR00516">
    <property type="entry name" value="acpS"/>
    <property type="match status" value="1"/>
</dbReference>
<dbReference type="NCBIfam" id="TIGR00556">
    <property type="entry name" value="pantethn_trn"/>
    <property type="match status" value="1"/>
</dbReference>
<dbReference type="PANTHER" id="PTHR12215:SF10">
    <property type="entry name" value="L-AMINOADIPATE-SEMIALDEHYDE DEHYDROGENASE-PHOSPHOPANTETHEINYL TRANSFERASE"/>
    <property type="match status" value="1"/>
</dbReference>
<dbReference type="PANTHER" id="PTHR12215">
    <property type="entry name" value="PHOSPHOPANTETHEINE TRANSFERASE"/>
    <property type="match status" value="1"/>
</dbReference>
<dbReference type="Pfam" id="PF01648">
    <property type="entry name" value="ACPS"/>
    <property type="match status" value="1"/>
</dbReference>
<dbReference type="SUPFAM" id="SSF56214">
    <property type="entry name" value="4'-phosphopantetheinyl transferase"/>
    <property type="match status" value="1"/>
</dbReference>
<organism>
    <name type="scientific">Bacillus anthracis (strain A0248)</name>
    <dbReference type="NCBI Taxonomy" id="592021"/>
    <lineage>
        <taxon>Bacteria</taxon>
        <taxon>Bacillati</taxon>
        <taxon>Bacillota</taxon>
        <taxon>Bacilli</taxon>
        <taxon>Bacillales</taxon>
        <taxon>Bacillaceae</taxon>
        <taxon>Bacillus</taxon>
        <taxon>Bacillus cereus group</taxon>
    </lineage>
</organism>
<sequence length="119" mass="13100">MIVGIGIDIIELNRIEKMLDGKLKFMERILTENERNVAKGLKGSRLTEFVAGRFAAKEAYSKAVGTGIGKEVSFLDIEVRNDDRGKPILITSTEHIVHLSISHSKEFAVAQVVLESSSS</sequence>
<reference key="1">
    <citation type="submission" date="2009-04" db="EMBL/GenBank/DDBJ databases">
        <title>Genome sequence of Bacillus anthracis A0248.</title>
        <authorList>
            <person name="Dodson R.J."/>
            <person name="Munk A.C."/>
            <person name="Bruce D."/>
            <person name="Detter C."/>
            <person name="Tapia R."/>
            <person name="Sutton G."/>
            <person name="Sims D."/>
            <person name="Brettin T."/>
        </authorList>
    </citation>
    <scope>NUCLEOTIDE SEQUENCE [LARGE SCALE GENOMIC DNA]</scope>
    <source>
        <strain>A0248</strain>
    </source>
</reference>
<proteinExistence type="inferred from homology"/>
<protein>
    <recommendedName>
        <fullName evidence="1">Holo-[acyl-carrier-protein] synthase</fullName>
        <shortName evidence="1">Holo-ACP synthase</shortName>
        <ecNumber evidence="1">2.7.8.7</ecNumber>
    </recommendedName>
    <alternativeName>
        <fullName evidence="1">4'-phosphopantetheinyl transferase AcpS</fullName>
    </alternativeName>
</protein>
<evidence type="ECO:0000255" key="1">
    <source>
        <dbReference type="HAMAP-Rule" id="MF_00101"/>
    </source>
</evidence>
<accession>C3PAT6</accession>
<keyword id="KW-0963">Cytoplasm</keyword>
<keyword id="KW-0275">Fatty acid biosynthesis</keyword>
<keyword id="KW-0276">Fatty acid metabolism</keyword>
<keyword id="KW-0444">Lipid biosynthesis</keyword>
<keyword id="KW-0443">Lipid metabolism</keyword>
<keyword id="KW-0460">Magnesium</keyword>
<keyword id="KW-0479">Metal-binding</keyword>
<keyword id="KW-0808">Transferase</keyword>
<feature type="chain" id="PRO_1000118790" description="Holo-[acyl-carrier-protein] synthase">
    <location>
        <begin position="1"/>
        <end position="119"/>
    </location>
</feature>
<feature type="binding site" evidence="1">
    <location>
        <position position="8"/>
    </location>
    <ligand>
        <name>Mg(2+)</name>
        <dbReference type="ChEBI" id="CHEBI:18420"/>
    </ligand>
</feature>
<feature type="binding site" evidence="1">
    <location>
        <position position="58"/>
    </location>
    <ligand>
        <name>Mg(2+)</name>
        <dbReference type="ChEBI" id="CHEBI:18420"/>
    </ligand>
</feature>